<reference key="1">
    <citation type="journal article" date="2009" name="PLoS Genet.">
        <title>The complete genome and proteome of Laribacter hongkongensis reveal potential mechanisms for adaptations to different temperatures and habitats.</title>
        <authorList>
            <person name="Woo P.C.Y."/>
            <person name="Lau S.K.P."/>
            <person name="Tse H."/>
            <person name="Teng J.L.L."/>
            <person name="Curreem S.O."/>
            <person name="Tsang A.K.L."/>
            <person name="Fan R.Y.Y."/>
            <person name="Wong G.K.M."/>
            <person name="Huang Y."/>
            <person name="Loman N.J."/>
            <person name="Snyder L.A.S."/>
            <person name="Cai J.J."/>
            <person name="Huang J.-D."/>
            <person name="Mak W."/>
            <person name="Pallen M.J."/>
            <person name="Lok S."/>
            <person name="Yuen K.-Y."/>
        </authorList>
    </citation>
    <scope>NUCLEOTIDE SEQUENCE [LARGE SCALE GENOMIC DNA]</scope>
    <source>
        <strain>HLHK9</strain>
    </source>
</reference>
<keyword id="KW-1185">Reference proteome</keyword>
<keyword id="KW-0686">Riboflavin biosynthesis</keyword>
<keyword id="KW-0808">Transferase</keyword>
<dbReference type="EC" id="2.5.1.78" evidence="1"/>
<dbReference type="EMBL" id="CP001154">
    <property type="protein sequence ID" value="ACO75371.1"/>
    <property type="molecule type" value="Genomic_DNA"/>
</dbReference>
<dbReference type="RefSeq" id="WP_012697857.1">
    <property type="nucleotide sequence ID" value="NC_012559.1"/>
</dbReference>
<dbReference type="SMR" id="C1DB32"/>
<dbReference type="STRING" id="557598.LHK_02389"/>
<dbReference type="GeneID" id="75109971"/>
<dbReference type="KEGG" id="lhk:LHK_02389"/>
<dbReference type="eggNOG" id="COG0054">
    <property type="taxonomic scope" value="Bacteria"/>
</dbReference>
<dbReference type="HOGENOM" id="CLU_089358_1_2_4"/>
<dbReference type="UniPathway" id="UPA00275">
    <property type="reaction ID" value="UER00404"/>
</dbReference>
<dbReference type="Proteomes" id="UP000002010">
    <property type="component" value="Chromosome"/>
</dbReference>
<dbReference type="GO" id="GO:0005829">
    <property type="term" value="C:cytosol"/>
    <property type="evidence" value="ECO:0007669"/>
    <property type="project" value="TreeGrafter"/>
</dbReference>
<dbReference type="GO" id="GO:0009349">
    <property type="term" value="C:riboflavin synthase complex"/>
    <property type="evidence" value="ECO:0007669"/>
    <property type="project" value="InterPro"/>
</dbReference>
<dbReference type="GO" id="GO:0000906">
    <property type="term" value="F:6,7-dimethyl-8-ribityllumazine synthase activity"/>
    <property type="evidence" value="ECO:0007669"/>
    <property type="project" value="UniProtKB-UniRule"/>
</dbReference>
<dbReference type="GO" id="GO:0009231">
    <property type="term" value="P:riboflavin biosynthetic process"/>
    <property type="evidence" value="ECO:0007669"/>
    <property type="project" value="UniProtKB-UniRule"/>
</dbReference>
<dbReference type="CDD" id="cd09209">
    <property type="entry name" value="Lumazine_synthase-I"/>
    <property type="match status" value="1"/>
</dbReference>
<dbReference type="Gene3D" id="3.40.50.960">
    <property type="entry name" value="Lumazine/riboflavin synthase"/>
    <property type="match status" value="1"/>
</dbReference>
<dbReference type="HAMAP" id="MF_00178">
    <property type="entry name" value="Lumazine_synth"/>
    <property type="match status" value="1"/>
</dbReference>
<dbReference type="InterPro" id="IPR034964">
    <property type="entry name" value="LS"/>
</dbReference>
<dbReference type="InterPro" id="IPR002180">
    <property type="entry name" value="LS/RS"/>
</dbReference>
<dbReference type="InterPro" id="IPR036467">
    <property type="entry name" value="LS/RS_sf"/>
</dbReference>
<dbReference type="NCBIfam" id="TIGR00114">
    <property type="entry name" value="lumazine-synth"/>
    <property type="match status" value="1"/>
</dbReference>
<dbReference type="PANTHER" id="PTHR21058:SF0">
    <property type="entry name" value="6,7-DIMETHYL-8-RIBITYLLUMAZINE SYNTHASE"/>
    <property type="match status" value="1"/>
</dbReference>
<dbReference type="PANTHER" id="PTHR21058">
    <property type="entry name" value="6,7-DIMETHYL-8-RIBITYLLUMAZINE SYNTHASE DMRL SYNTHASE LUMAZINE SYNTHASE"/>
    <property type="match status" value="1"/>
</dbReference>
<dbReference type="Pfam" id="PF00885">
    <property type="entry name" value="DMRL_synthase"/>
    <property type="match status" value="1"/>
</dbReference>
<dbReference type="SUPFAM" id="SSF52121">
    <property type="entry name" value="Lumazine synthase"/>
    <property type="match status" value="1"/>
</dbReference>
<evidence type="ECO:0000255" key="1">
    <source>
        <dbReference type="HAMAP-Rule" id="MF_00178"/>
    </source>
</evidence>
<feature type="chain" id="PRO_1000195493" description="6,7-dimethyl-8-ribityllumazine synthase">
    <location>
        <begin position="1"/>
        <end position="157"/>
    </location>
</feature>
<feature type="active site" description="Proton donor" evidence="1">
    <location>
        <position position="94"/>
    </location>
</feature>
<feature type="binding site" evidence="1">
    <location>
        <position position="26"/>
    </location>
    <ligand>
        <name>5-amino-6-(D-ribitylamino)uracil</name>
        <dbReference type="ChEBI" id="CHEBI:15934"/>
    </ligand>
</feature>
<feature type="binding site" evidence="1">
    <location>
        <begin position="60"/>
        <end position="62"/>
    </location>
    <ligand>
        <name>5-amino-6-(D-ribitylamino)uracil</name>
        <dbReference type="ChEBI" id="CHEBI:15934"/>
    </ligand>
</feature>
<feature type="binding site" evidence="1">
    <location>
        <begin position="86"/>
        <end position="88"/>
    </location>
    <ligand>
        <name>5-amino-6-(D-ribitylamino)uracil</name>
        <dbReference type="ChEBI" id="CHEBI:15934"/>
    </ligand>
</feature>
<feature type="binding site" evidence="1">
    <location>
        <begin position="91"/>
        <end position="92"/>
    </location>
    <ligand>
        <name>(2S)-2-hydroxy-3-oxobutyl phosphate</name>
        <dbReference type="ChEBI" id="CHEBI:58830"/>
    </ligand>
</feature>
<feature type="binding site" evidence="1">
    <location>
        <position position="119"/>
    </location>
    <ligand>
        <name>5-amino-6-(D-ribitylamino)uracil</name>
        <dbReference type="ChEBI" id="CHEBI:15934"/>
    </ligand>
</feature>
<feature type="binding site" evidence="1">
    <location>
        <position position="133"/>
    </location>
    <ligand>
        <name>(2S)-2-hydroxy-3-oxobutyl phosphate</name>
        <dbReference type="ChEBI" id="CHEBI:58830"/>
    </ligand>
</feature>
<accession>C1DB32</accession>
<protein>
    <recommendedName>
        <fullName evidence="1">6,7-dimethyl-8-ribityllumazine synthase</fullName>
        <shortName evidence="1">DMRL synthase</shortName>
        <shortName evidence="1">LS</shortName>
        <shortName evidence="1">Lumazine synthase</shortName>
        <ecNumber evidence="1">2.5.1.78</ecNumber>
    </recommendedName>
</protein>
<proteinExistence type="inferred from homology"/>
<organism>
    <name type="scientific">Laribacter hongkongensis (strain HLHK9)</name>
    <dbReference type="NCBI Taxonomy" id="557598"/>
    <lineage>
        <taxon>Bacteria</taxon>
        <taxon>Pseudomonadati</taxon>
        <taxon>Pseudomonadota</taxon>
        <taxon>Betaproteobacteria</taxon>
        <taxon>Neisseriales</taxon>
        <taxon>Aquaspirillaceae</taxon>
        <taxon>Laribacter</taxon>
    </lineage>
</organism>
<comment type="function">
    <text evidence="1">Catalyzes the formation of 6,7-dimethyl-8-ribityllumazine by condensation of 5-amino-6-(D-ribitylamino)uracil with 3,4-dihydroxy-2-butanone 4-phosphate. This is the penultimate step in the biosynthesis of riboflavin.</text>
</comment>
<comment type="catalytic activity">
    <reaction evidence="1">
        <text>(2S)-2-hydroxy-3-oxobutyl phosphate + 5-amino-6-(D-ribitylamino)uracil = 6,7-dimethyl-8-(1-D-ribityl)lumazine + phosphate + 2 H2O + H(+)</text>
        <dbReference type="Rhea" id="RHEA:26152"/>
        <dbReference type="ChEBI" id="CHEBI:15377"/>
        <dbReference type="ChEBI" id="CHEBI:15378"/>
        <dbReference type="ChEBI" id="CHEBI:15934"/>
        <dbReference type="ChEBI" id="CHEBI:43474"/>
        <dbReference type="ChEBI" id="CHEBI:58201"/>
        <dbReference type="ChEBI" id="CHEBI:58830"/>
        <dbReference type="EC" id="2.5.1.78"/>
    </reaction>
</comment>
<comment type="pathway">
    <text evidence="1">Cofactor biosynthesis; riboflavin biosynthesis; riboflavin from 2-hydroxy-3-oxobutyl phosphate and 5-amino-6-(D-ribitylamino)uracil: step 1/2.</text>
</comment>
<comment type="similarity">
    <text evidence="1">Belongs to the DMRL synthase family.</text>
</comment>
<name>RISB_LARHH</name>
<sequence length="157" mass="16847">MNPDIVNLESNLNGEGLRIGVVMARFNLPVCEGLRDACLDELLALGVEPTDITFVTVPGALEIPLALQAMAQNEDDSYDALVALGAVIRGETYHFELVSNEAGAALTRVGLDFDIPVANGVLTCDTDEQAEARMAEKGRDCARCAVEMANLQKAFYD</sequence>
<gene>
    <name evidence="1" type="primary">ribH</name>
    <name type="ordered locus">LHK_02389</name>
</gene>